<name>RK5_PLETE</name>
<sequence length="186" mass="21058">MKINRLKKYYLQTIVPKLIEQFAYKNQMQVPRLEKIVINRGIGDASQNAKVLESSLKELTIIAGQKGIITRSKKAIAGFKLRQNLPVGVCVTLRGERMYSFLDRLINLALPRIRDFRGMSVESFDGQGNYSLGVEEQLMFPEIVYDKIEQITGMDISIVTSSKTNDEAHALLKEFGMPFKAKGNKN</sequence>
<evidence type="ECO:0000250" key="1"/>
<evidence type="ECO:0000305" key="2"/>
<proteinExistence type="inferred from homology"/>
<comment type="function">
    <text evidence="1">Binds 5S rRNA, forms part of the central protuberance of the 50S subunit.</text>
</comment>
<comment type="subunit">
    <text evidence="1">Part of the 50S ribosomal subunit; contacts the 5S rRNA.</text>
</comment>
<comment type="subcellular location">
    <subcellularLocation>
        <location>Plastid</location>
        <location>Chloroplast</location>
    </subcellularLocation>
</comment>
<comment type="similarity">
    <text evidence="2">Belongs to the universal ribosomal protein uL5 family.</text>
</comment>
<feature type="chain" id="PRO_0000365648" description="Large ribosomal subunit protein uL5c">
    <location>
        <begin position="1"/>
        <end position="186"/>
    </location>
</feature>
<protein>
    <recommendedName>
        <fullName evidence="2">Large ribosomal subunit protein uL5c</fullName>
    </recommendedName>
    <alternativeName>
        <fullName>50S ribosomal protein L5, chloroplastic</fullName>
    </alternativeName>
</protein>
<dbReference type="EMBL" id="EF506945">
    <property type="protein sequence ID" value="ABO69342.1"/>
    <property type="molecule type" value="Genomic_DNA"/>
</dbReference>
<dbReference type="RefSeq" id="YP_001382206.1">
    <property type="nucleotide sequence ID" value="NC_009681.1"/>
</dbReference>
<dbReference type="SMR" id="A6YGC9"/>
<dbReference type="GeneID" id="5383776"/>
<dbReference type="GO" id="GO:0009507">
    <property type="term" value="C:chloroplast"/>
    <property type="evidence" value="ECO:0007669"/>
    <property type="project" value="UniProtKB-SubCell"/>
</dbReference>
<dbReference type="GO" id="GO:1990904">
    <property type="term" value="C:ribonucleoprotein complex"/>
    <property type="evidence" value="ECO:0007669"/>
    <property type="project" value="UniProtKB-KW"/>
</dbReference>
<dbReference type="GO" id="GO:0005840">
    <property type="term" value="C:ribosome"/>
    <property type="evidence" value="ECO:0007669"/>
    <property type="project" value="UniProtKB-KW"/>
</dbReference>
<dbReference type="GO" id="GO:0019843">
    <property type="term" value="F:rRNA binding"/>
    <property type="evidence" value="ECO:0007669"/>
    <property type="project" value="UniProtKB-UniRule"/>
</dbReference>
<dbReference type="GO" id="GO:0003735">
    <property type="term" value="F:structural constituent of ribosome"/>
    <property type="evidence" value="ECO:0007669"/>
    <property type="project" value="InterPro"/>
</dbReference>
<dbReference type="GO" id="GO:0006412">
    <property type="term" value="P:translation"/>
    <property type="evidence" value="ECO:0007669"/>
    <property type="project" value="UniProtKB-UniRule"/>
</dbReference>
<dbReference type="FunFam" id="3.30.1440.10:FF:000001">
    <property type="entry name" value="50S ribosomal protein L5"/>
    <property type="match status" value="1"/>
</dbReference>
<dbReference type="Gene3D" id="3.30.1440.10">
    <property type="match status" value="1"/>
</dbReference>
<dbReference type="HAMAP" id="MF_01333_B">
    <property type="entry name" value="Ribosomal_uL5_B"/>
    <property type="match status" value="1"/>
</dbReference>
<dbReference type="InterPro" id="IPR002132">
    <property type="entry name" value="Ribosomal_uL5"/>
</dbReference>
<dbReference type="InterPro" id="IPR020930">
    <property type="entry name" value="Ribosomal_uL5_bac-type"/>
</dbReference>
<dbReference type="InterPro" id="IPR031309">
    <property type="entry name" value="Ribosomal_uL5_C"/>
</dbReference>
<dbReference type="InterPro" id="IPR020929">
    <property type="entry name" value="Ribosomal_uL5_CS"/>
</dbReference>
<dbReference type="InterPro" id="IPR022803">
    <property type="entry name" value="Ribosomal_uL5_dom_sf"/>
</dbReference>
<dbReference type="InterPro" id="IPR031310">
    <property type="entry name" value="Ribosomal_uL5_N"/>
</dbReference>
<dbReference type="NCBIfam" id="NF000585">
    <property type="entry name" value="PRK00010.1"/>
    <property type="match status" value="1"/>
</dbReference>
<dbReference type="PANTHER" id="PTHR11994">
    <property type="entry name" value="60S RIBOSOMAL PROTEIN L11-RELATED"/>
    <property type="match status" value="1"/>
</dbReference>
<dbReference type="Pfam" id="PF00281">
    <property type="entry name" value="Ribosomal_L5"/>
    <property type="match status" value="1"/>
</dbReference>
<dbReference type="Pfam" id="PF00673">
    <property type="entry name" value="Ribosomal_L5_C"/>
    <property type="match status" value="1"/>
</dbReference>
<dbReference type="PIRSF" id="PIRSF002161">
    <property type="entry name" value="Ribosomal_L5"/>
    <property type="match status" value="1"/>
</dbReference>
<dbReference type="SUPFAM" id="SSF55282">
    <property type="entry name" value="RL5-like"/>
    <property type="match status" value="1"/>
</dbReference>
<dbReference type="PROSITE" id="PS00358">
    <property type="entry name" value="RIBOSOMAL_L5"/>
    <property type="match status" value="1"/>
</dbReference>
<gene>
    <name type="primary">rpl5</name>
</gene>
<accession>A6YGC9</accession>
<keyword id="KW-0150">Chloroplast</keyword>
<keyword id="KW-0934">Plastid</keyword>
<keyword id="KW-0687">Ribonucleoprotein</keyword>
<keyword id="KW-0689">Ribosomal protein</keyword>
<keyword id="KW-0694">RNA-binding</keyword>
<keyword id="KW-0699">rRNA-binding</keyword>
<organism>
    <name type="scientific">Pleurastrum terricola</name>
    <name type="common">Filamentous green alga</name>
    <name type="synonym">Leptosira terrestris</name>
    <dbReference type="NCBI Taxonomy" id="34116"/>
    <lineage>
        <taxon>Eukaryota</taxon>
        <taxon>Viridiplantae</taxon>
        <taxon>Chlorophyta</taxon>
        <taxon>core chlorophytes</taxon>
        <taxon>Chlorophyceae</taxon>
        <taxon>CS clade</taxon>
        <taxon>Chlamydomonadales</taxon>
        <taxon>Pleurastraceae</taxon>
        <taxon>Pleurastrum</taxon>
    </lineage>
</organism>
<reference key="1">
    <citation type="journal article" date="2007" name="BMC Genomics">
        <title>The chloroplast genome sequence of the green alga Leptosira terrestris: multiple losses of the inverted repeat and extensive genome rearrangements within the Trebouxiophyceae.</title>
        <authorList>
            <person name="de Cambiaire J.-C."/>
            <person name="Otis C."/>
            <person name="Turmel M."/>
            <person name="Lemieux C."/>
        </authorList>
    </citation>
    <scope>NUCLEOTIDE SEQUENCE [LARGE SCALE GENOMIC DNA]</scope>
    <source>
        <strain>CCAP 463/2 / UTEX 333</strain>
    </source>
</reference>
<geneLocation type="chloroplast"/>